<evidence type="ECO:0000269" key="1">
    <source>
    </source>
</evidence>
<evidence type="ECO:0000305" key="2"/>
<evidence type="ECO:0000305" key="3">
    <source>
    </source>
</evidence>
<evidence type="ECO:0007744" key="4">
    <source>
        <dbReference type="PDB" id="3SBF"/>
    </source>
</evidence>
<evidence type="ECO:0007829" key="5">
    <source>
        <dbReference type="PDB" id="3R25"/>
    </source>
</evidence>
<evidence type="ECO:0007829" key="6">
    <source>
        <dbReference type="PDB" id="3SBF"/>
    </source>
</evidence>
<dbReference type="EMBL" id="AAZW01000001">
    <property type="protein sequence ID" value="EDK31132.1"/>
    <property type="molecule type" value="Genomic_DNA"/>
</dbReference>
<dbReference type="PDB" id="3DFH">
    <property type="method" value="X-ray"/>
    <property type="resolution" value="2.20 A"/>
    <property type="chains" value="A/B/C=2-385"/>
</dbReference>
<dbReference type="PDB" id="3R25">
    <property type="method" value="X-ray"/>
    <property type="resolution" value="1.60 A"/>
    <property type="chains" value="A/B/C/D/E/F/G/H=1-399"/>
</dbReference>
<dbReference type="PDB" id="3SBF">
    <property type="method" value="X-ray"/>
    <property type="resolution" value="1.50 A"/>
    <property type="chains" value="A/B/C/D=2-399"/>
</dbReference>
<dbReference type="PDBsum" id="3DFH"/>
<dbReference type="PDBsum" id="3R25"/>
<dbReference type="PDBsum" id="3SBF"/>
<dbReference type="SMR" id="A5KUH4"/>
<dbReference type="EvolutionaryTrace" id="A5KUH4"/>
<dbReference type="Proteomes" id="UP000004912">
    <property type="component" value="Unassembled WGS sequence"/>
</dbReference>
<dbReference type="GO" id="GO:0000287">
    <property type="term" value="F:magnesium ion binding"/>
    <property type="evidence" value="ECO:0000314"/>
    <property type="project" value="UniProtKB"/>
</dbReference>
<dbReference type="GO" id="GO:0009063">
    <property type="term" value="P:amino acid catabolic process"/>
    <property type="evidence" value="ECO:0007669"/>
    <property type="project" value="InterPro"/>
</dbReference>
<dbReference type="FunFam" id="3.20.20.120:FF:000011">
    <property type="entry name" value="D-galactonate dehydratase family member VSWAT3_13707"/>
    <property type="match status" value="1"/>
</dbReference>
<dbReference type="FunFam" id="3.30.390.10:FF:000002">
    <property type="entry name" value="D-galactonate dehydratase family protein"/>
    <property type="match status" value="1"/>
</dbReference>
<dbReference type="Gene3D" id="3.20.20.120">
    <property type="entry name" value="Enolase-like C-terminal domain"/>
    <property type="match status" value="1"/>
</dbReference>
<dbReference type="Gene3D" id="3.30.390.10">
    <property type="entry name" value="Enolase-like, N-terminal domain"/>
    <property type="match status" value="1"/>
</dbReference>
<dbReference type="InterPro" id="IPR034589">
    <property type="entry name" value="D-mannonate_dehydratase-like"/>
</dbReference>
<dbReference type="InterPro" id="IPR034593">
    <property type="entry name" value="DgoD-like"/>
</dbReference>
<dbReference type="InterPro" id="IPR036849">
    <property type="entry name" value="Enolase-like_C_sf"/>
</dbReference>
<dbReference type="InterPro" id="IPR029017">
    <property type="entry name" value="Enolase-like_N"/>
</dbReference>
<dbReference type="InterPro" id="IPR029065">
    <property type="entry name" value="Enolase_C-like"/>
</dbReference>
<dbReference type="InterPro" id="IPR018110">
    <property type="entry name" value="Mandel_Rmase/mucon_lact_enz_CS"/>
</dbReference>
<dbReference type="InterPro" id="IPR013342">
    <property type="entry name" value="Mandelate_racemase_C"/>
</dbReference>
<dbReference type="InterPro" id="IPR013341">
    <property type="entry name" value="Mandelate_racemase_N_dom"/>
</dbReference>
<dbReference type="PANTHER" id="PTHR48080">
    <property type="entry name" value="D-GALACTONATE DEHYDRATASE-RELATED"/>
    <property type="match status" value="1"/>
</dbReference>
<dbReference type="PANTHER" id="PTHR48080:SF6">
    <property type="entry name" value="STARVATION-SENSING PROTEIN RSPA"/>
    <property type="match status" value="1"/>
</dbReference>
<dbReference type="Pfam" id="PF13378">
    <property type="entry name" value="MR_MLE_C"/>
    <property type="match status" value="1"/>
</dbReference>
<dbReference type="Pfam" id="PF02746">
    <property type="entry name" value="MR_MLE_N"/>
    <property type="match status" value="1"/>
</dbReference>
<dbReference type="SFLD" id="SFLDS00001">
    <property type="entry name" value="Enolase"/>
    <property type="match status" value="1"/>
</dbReference>
<dbReference type="SFLD" id="SFLDG00033">
    <property type="entry name" value="mannonate_dehydratase"/>
    <property type="match status" value="1"/>
</dbReference>
<dbReference type="SMART" id="SM00922">
    <property type="entry name" value="MR_MLE"/>
    <property type="match status" value="1"/>
</dbReference>
<dbReference type="SUPFAM" id="SSF51604">
    <property type="entry name" value="Enolase C-terminal domain-like"/>
    <property type="match status" value="1"/>
</dbReference>
<dbReference type="SUPFAM" id="SSF54826">
    <property type="entry name" value="Enolase N-terminal domain-like"/>
    <property type="match status" value="1"/>
</dbReference>
<dbReference type="PROSITE" id="PS00908">
    <property type="entry name" value="MR_MLE_1"/>
    <property type="match status" value="1"/>
</dbReference>
<sequence>MKETIISDIHCIITKPDRHNLITVVVETNEGVTGFGCATFQQRPLAVKTMVDEYLKPILIGKNANNIEDLWQMMMVNAYWRNGPVINNAISGVDMALWDIKAKLAGMPLHQLFGGKSRDAIPVYTHATSDTMEGIYDLVEGFLEKGYKHIRCQLGFYGGVPTDLHTTQNPTEGSYYDQDQYMDNTLTMFKSLREKYGNQFHILHDVHERLFPNQAIQFAKEVEQYKPYFIEDILPPNQTEWLDNIRSQSSVSLGLGELFNNPEEWKSLIANRRIDFIRCHVSQIGGITPALKLGHLCQNFGVRIAWHCPPDMTPIGAAVNTHLNVHLHNAAIQEHVEYNGNTHKVFPNAAEPINGYLYASEIAGIGVEIDREAAAEFPVMYRPHEWTQSRLPDGAIHTP</sequence>
<feature type="chain" id="PRO_0000429917" description="D-galactonate dehydratase family member VSWAT3_13707">
    <location>
        <begin position="1"/>
        <end position="399"/>
    </location>
</feature>
<feature type="binding site" evidence="1">
    <location>
        <position position="205"/>
    </location>
    <ligand>
        <name>Mg(2+)</name>
        <dbReference type="ChEBI" id="CHEBI:18420"/>
    </ligand>
</feature>
<feature type="binding site" evidence="4">
    <location>
        <position position="207"/>
    </location>
    <ligand>
        <name>D-arabinonate</name>
        <dbReference type="ChEBI" id="CHEBI:16157"/>
    </ligand>
</feature>
<feature type="binding site" evidence="1">
    <location>
        <position position="231"/>
    </location>
    <ligand>
        <name>Mg(2+)</name>
        <dbReference type="ChEBI" id="CHEBI:18420"/>
    </ligand>
</feature>
<feature type="binding site" evidence="4">
    <location>
        <position position="257"/>
    </location>
    <ligand>
        <name>D-arabinonate</name>
        <dbReference type="ChEBI" id="CHEBI:16157"/>
    </ligand>
</feature>
<feature type="binding site" evidence="1">
    <location>
        <position position="257"/>
    </location>
    <ligand>
        <name>Mg(2+)</name>
        <dbReference type="ChEBI" id="CHEBI:18420"/>
    </ligand>
</feature>
<feature type="binding site" evidence="4">
    <location>
        <position position="278"/>
    </location>
    <ligand>
        <name>D-arabinonate</name>
        <dbReference type="ChEBI" id="CHEBI:16157"/>
    </ligand>
</feature>
<feature type="binding site" evidence="4">
    <location>
        <position position="307"/>
    </location>
    <ligand>
        <name>D-arabinonate</name>
        <dbReference type="ChEBI" id="CHEBI:16157"/>
    </ligand>
</feature>
<feature type="binding site" evidence="4">
    <location>
        <position position="334"/>
    </location>
    <ligand>
        <name>D-arabinonate</name>
        <dbReference type="ChEBI" id="CHEBI:16157"/>
    </ligand>
</feature>
<feature type="strand" evidence="6">
    <location>
        <begin position="5"/>
        <end position="14"/>
    </location>
</feature>
<feature type="strand" evidence="6">
    <location>
        <begin position="16"/>
        <end position="19"/>
    </location>
</feature>
<feature type="strand" evidence="6">
    <location>
        <begin position="21"/>
        <end position="28"/>
    </location>
</feature>
<feature type="strand" evidence="6">
    <location>
        <begin position="33"/>
        <end position="37"/>
    </location>
</feature>
<feature type="helix" evidence="6">
    <location>
        <begin position="44"/>
        <end position="53"/>
    </location>
</feature>
<feature type="helix" evidence="6">
    <location>
        <begin position="55"/>
        <end position="59"/>
    </location>
</feature>
<feature type="helix" evidence="6">
    <location>
        <begin position="67"/>
        <end position="76"/>
    </location>
</feature>
<feature type="helix" evidence="6">
    <location>
        <begin position="84"/>
        <end position="105"/>
    </location>
</feature>
<feature type="helix" evidence="6">
    <location>
        <begin position="109"/>
        <end position="113"/>
    </location>
</feature>
<feature type="strand" evidence="6">
    <location>
        <begin position="117"/>
        <end position="131"/>
    </location>
</feature>
<feature type="helix" evidence="6">
    <location>
        <begin position="132"/>
        <end position="144"/>
    </location>
</feature>
<feature type="strand" evidence="6">
    <location>
        <begin position="149"/>
        <end position="155"/>
    </location>
</feature>
<feature type="helix" evidence="5">
    <location>
        <begin position="157"/>
        <end position="159"/>
    </location>
</feature>
<feature type="helix" evidence="6">
    <location>
        <begin position="161"/>
        <end position="163"/>
    </location>
</feature>
<feature type="strand" evidence="6">
    <location>
        <begin position="172"/>
        <end position="175"/>
    </location>
</feature>
<feature type="helix" evidence="6">
    <location>
        <begin position="178"/>
        <end position="196"/>
    </location>
</feature>
<feature type="strand" evidence="6">
    <location>
        <begin position="199"/>
        <end position="205"/>
    </location>
</feature>
<feature type="helix" evidence="6">
    <location>
        <begin position="212"/>
        <end position="222"/>
    </location>
</feature>
<feature type="helix" evidence="6">
    <location>
        <begin position="223"/>
        <end position="225"/>
    </location>
</feature>
<feature type="strand" evidence="5">
    <location>
        <begin position="228"/>
        <end position="231"/>
    </location>
</feature>
<feature type="helix" evidence="6">
    <location>
        <begin position="239"/>
        <end position="241"/>
    </location>
</feature>
<feature type="helix" evidence="6">
    <location>
        <begin position="242"/>
        <end position="246"/>
    </location>
</feature>
<feature type="strand" evidence="6">
    <location>
        <begin position="253"/>
        <end position="255"/>
    </location>
</feature>
<feature type="helix" evidence="6">
    <location>
        <begin position="262"/>
        <end position="270"/>
    </location>
</feature>
<feature type="strand" evidence="6">
    <location>
        <begin position="275"/>
        <end position="277"/>
    </location>
</feature>
<feature type="helix" evidence="6">
    <location>
        <begin position="281"/>
        <end position="284"/>
    </location>
</feature>
<feature type="helix" evidence="6">
    <location>
        <begin position="287"/>
        <end position="300"/>
    </location>
</feature>
<feature type="strand" evidence="5">
    <location>
        <begin position="310"/>
        <end position="312"/>
    </location>
</feature>
<feature type="helix" evidence="6">
    <location>
        <begin position="314"/>
        <end position="326"/>
    </location>
</feature>
<feature type="helix" evidence="6">
    <location>
        <begin position="340"/>
        <end position="345"/>
    </location>
</feature>
<feature type="strand" evidence="6">
    <location>
        <begin position="362"/>
        <end position="366"/>
    </location>
</feature>
<feature type="helix" evidence="6">
    <location>
        <begin position="371"/>
        <end position="375"/>
    </location>
</feature>
<feature type="helix" evidence="6">
    <location>
        <begin position="385"/>
        <end position="387"/>
    </location>
</feature>
<feature type="strand" evidence="6">
    <location>
        <begin position="388"/>
        <end position="390"/>
    </location>
</feature>
<keyword id="KW-0002">3D-structure</keyword>
<keyword id="KW-0460">Magnesium</keyword>
<keyword id="KW-0479">Metal-binding</keyword>
<gene>
    <name type="ORF">VSWAT3_13707</name>
</gene>
<organism>
    <name type="scientific">Vibrionales bacterium (strain SWAT-3)</name>
    <dbReference type="NCBI Taxonomy" id="391574"/>
    <lineage>
        <taxon>Bacteria</taxon>
        <taxon>Pseudomonadati</taxon>
        <taxon>Pseudomonadota</taxon>
        <taxon>Gammaproteobacteria</taxon>
        <taxon>Vibrionales</taxon>
    </lineage>
</organism>
<name>IMAND_VIBBS</name>
<comment type="function">
    <text evidence="1">Has no detectable activity with D-mannonate and with a panel of 70 other acid sugars (in vitro), in spite of the conservation of the residues that are expected to be important for catalytic activity and cofactor binding. May have evolved a divergent function.</text>
</comment>
<comment type="subunit">
    <text evidence="3">Homotetramer.</text>
</comment>
<comment type="similarity">
    <text evidence="2">Belongs to the mandelate racemase/muconate lactonizing enzyme family. GalD subfamily.</text>
</comment>
<accession>A5KUH4</accession>
<reference key="1">
    <citation type="submission" date="2007-04" db="EMBL/GenBank/DDBJ databases">
        <authorList>
            <person name="Azam F."/>
            <person name="Ferriera S."/>
            <person name="Johnson J."/>
            <person name="Kravitz S."/>
            <person name="Beeson K."/>
            <person name="Sutton G."/>
            <person name="Rogers Y.-H."/>
            <person name="Friedman R."/>
            <person name="Frazier M."/>
            <person name="Venter J.C."/>
        </authorList>
    </citation>
    <scope>NUCLEOTIDE SEQUENCE [LARGE SCALE GENOMIC DNA]</scope>
    <source>
        <strain>SWAT-3</strain>
    </source>
</reference>
<reference key="2">
    <citation type="journal article" date="2014" name="Biochemistry">
        <title>Discovery of function in the enolase superfamily: D-mannonate and D-gluconate dehydratases in the D-mannonate dehydratase subgroup.</title>
        <authorList>
            <person name="Wichelecki D.J."/>
            <person name="Balthazor B.M."/>
            <person name="Chau A.C."/>
            <person name="Vetting M.W."/>
            <person name="Fedorov A.A."/>
            <person name="Fedorov E.V."/>
            <person name="Lukk T."/>
            <person name="Patskovsky Y.V."/>
            <person name="Stead M.B."/>
            <person name="Hillerich B.S."/>
            <person name="Seidel R.D."/>
            <person name="Almo S.C."/>
            <person name="Gerlt J.A."/>
        </authorList>
    </citation>
    <scope>X-RAY CRYSTALLOGRAPHY (1.50 ANGSTROMS) OF 2-399 IN COMPLEX WITH MAGNESIUM AND D-ARABINONATE</scope>
    <scope>FUNCTION</scope>
    <scope>SUBUNIT</scope>
    <scope>LACK OF D-MANNONATE DEHYDRATASE ACTIVITY</scope>
    <source>
        <strain>SWAT-3</strain>
    </source>
</reference>
<proteinExistence type="evidence at protein level"/>
<protein>
    <recommendedName>
        <fullName>D-galactonate dehydratase family member VSWAT3_13707</fullName>
    </recommendedName>
</protein>